<feature type="chain" id="PRO_0000383744" description="F-box/SPRY domain-containing protein 1">
    <location>
        <begin position="1"/>
        <end position="291"/>
    </location>
</feature>
<feature type="domain" description="F-box" evidence="2">
    <location>
        <begin position="39"/>
        <end position="87"/>
    </location>
</feature>
<feature type="domain" description="B30.2/SPRY" evidence="3">
    <location>
        <begin position="97"/>
        <end position="289"/>
    </location>
</feature>
<reference key="1">
    <citation type="submission" date="2004-02" db="EMBL/GenBank/DDBJ databases">
        <authorList>
            <consortium name="NIH - Zebrafish Gene Collection (ZGC) project"/>
        </authorList>
    </citation>
    <scope>NUCLEOTIDE SEQUENCE [LARGE SCALE MRNA]</scope>
    <source>
        <tissue>Embryo</tissue>
    </source>
</reference>
<dbReference type="EMBL" id="BC056756">
    <property type="protein sequence ID" value="AAH56756.1"/>
    <property type="molecule type" value="mRNA"/>
</dbReference>
<dbReference type="EMBL" id="BC066397">
    <property type="protein sequence ID" value="AAH66397.2"/>
    <property type="molecule type" value="mRNA"/>
</dbReference>
<dbReference type="RefSeq" id="NP_956889.1">
    <property type="nucleotide sequence ID" value="NM_200595.1"/>
</dbReference>
<dbReference type="SMR" id="Q6NZ03"/>
<dbReference type="FunCoup" id="Q6NZ03">
    <property type="interactions" value="993"/>
</dbReference>
<dbReference type="STRING" id="7955.ENSDARP00000106584"/>
<dbReference type="PaxDb" id="7955-ENSDARP00000106584"/>
<dbReference type="Ensembl" id="ENSDART00000187236">
    <property type="protein sequence ID" value="ENSDARP00000157513"/>
    <property type="gene ID" value="ENSDARG00000111553"/>
</dbReference>
<dbReference type="GeneID" id="393567"/>
<dbReference type="KEGG" id="dre:393567"/>
<dbReference type="AGR" id="ZFIN:ZDB-GENE-040426-1450"/>
<dbReference type="CTD" id="200933"/>
<dbReference type="ZFIN" id="ZDB-GENE-040426-1450">
    <property type="gene designation" value="fbxo45"/>
</dbReference>
<dbReference type="eggNOG" id="KOG3953">
    <property type="taxonomic scope" value="Eukaryota"/>
</dbReference>
<dbReference type="InParanoid" id="Q6NZ03"/>
<dbReference type="OMA" id="ATKRASM"/>
<dbReference type="OrthoDB" id="2398163at2759"/>
<dbReference type="PhylomeDB" id="Q6NZ03"/>
<dbReference type="UniPathway" id="UPA00143"/>
<dbReference type="PRO" id="PR:Q6NZ03"/>
<dbReference type="Proteomes" id="UP000000437">
    <property type="component" value="Alternate scaffold 24"/>
</dbReference>
<dbReference type="Proteomes" id="UP000000437">
    <property type="component" value="Chromosome 24"/>
</dbReference>
<dbReference type="GO" id="GO:0019005">
    <property type="term" value="C:SCF ubiquitin ligase complex"/>
    <property type="evidence" value="ECO:0000318"/>
    <property type="project" value="GO_Central"/>
</dbReference>
<dbReference type="GO" id="GO:0045202">
    <property type="term" value="C:synapse"/>
    <property type="evidence" value="ECO:0000318"/>
    <property type="project" value="GO_Central"/>
</dbReference>
<dbReference type="GO" id="GO:0043161">
    <property type="term" value="P:proteasome-mediated ubiquitin-dependent protein catabolic process"/>
    <property type="evidence" value="ECO:0000318"/>
    <property type="project" value="GO_Central"/>
</dbReference>
<dbReference type="GO" id="GO:0016567">
    <property type="term" value="P:protein ubiquitination"/>
    <property type="evidence" value="ECO:0007669"/>
    <property type="project" value="UniProtKB-UniPathway"/>
</dbReference>
<dbReference type="GO" id="GO:0060386">
    <property type="term" value="P:synapse assembly involved in innervation"/>
    <property type="evidence" value="ECO:0000318"/>
    <property type="project" value="GO_Central"/>
</dbReference>
<dbReference type="CDD" id="cd22111">
    <property type="entry name" value="F-box_FBXO45"/>
    <property type="match status" value="1"/>
</dbReference>
<dbReference type="CDD" id="cd12907">
    <property type="entry name" value="SPRY_Fbox"/>
    <property type="match status" value="1"/>
</dbReference>
<dbReference type="FunFam" id="1.20.1280.50:FF:000024">
    <property type="entry name" value="F-box/SPRY domain-containing protein 1"/>
    <property type="match status" value="1"/>
</dbReference>
<dbReference type="FunFam" id="2.60.120.920:FF:000017">
    <property type="entry name" value="F-box/SPRY domain-containing protein 1"/>
    <property type="match status" value="1"/>
</dbReference>
<dbReference type="Gene3D" id="1.20.1280.50">
    <property type="match status" value="1"/>
</dbReference>
<dbReference type="Gene3D" id="2.60.120.920">
    <property type="match status" value="1"/>
</dbReference>
<dbReference type="InterPro" id="IPR001870">
    <property type="entry name" value="B30.2/SPRY"/>
</dbReference>
<dbReference type="InterPro" id="IPR043136">
    <property type="entry name" value="B30.2/SPRY_sf"/>
</dbReference>
<dbReference type="InterPro" id="IPR013320">
    <property type="entry name" value="ConA-like_dom_sf"/>
</dbReference>
<dbReference type="InterPro" id="IPR036047">
    <property type="entry name" value="F-box-like_dom_sf"/>
</dbReference>
<dbReference type="InterPro" id="IPR001810">
    <property type="entry name" value="F-box_dom"/>
</dbReference>
<dbReference type="InterPro" id="IPR050672">
    <property type="entry name" value="FBXO45-Fsn/SPSB_families"/>
</dbReference>
<dbReference type="InterPro" id="IPR003877">
    <property type="entry name" value="SPRY_dom"/>
</dbReference>
<dbReference type="InterPro" id="IPR035784">
    <property type="entry name" value="SPRY_FBXO45"/>
</dbReference>
<dbReference type="PANTHER" id="PTHR12245:SF7">
    <property type="entry name" value="F-BOX_SPRY DOMAIN-CONTAINING PROTEIN 1"/>
    <property type="match status" value="1"/>
</dbReference>
<dbReference type="PANTHER" id="PTHR12245">
    <property type="entry name" value="SPRY DOMAIN CONTAINING SOCS BOX PROTEIN"/>
    <property type="match status" value="1"/>
</dbReference>
<dbReference type="Pfam" id="PF12937">
    <property type="entry name" value="F-box-like"/>
    <property type="match status" value="1"/>
</dbReference>
<dbReference type="Pfam" id="PF00622">
    <property type="entry name" value="SPRY"/>
    <property type="match status" value="1"/>
</dbReference>
<dbReference type="SMART" id="SM00256">
    <property type="entry name" value="FBOX"/>
    <property type="match status" value="1"/>
</dbReference>
<dbReference type="SMART" id="SM00449">
    <property type="entry name" value="SPRY"/>
    <property type="match status" value="1"/>
</dbReference>
<dbReference type="SUPFAM" id="SSF49899">
    <property type="entry name" value="Concanavalin A-like lectins/glucanases"/>
    <property type="match status" value="1"/>
</dbReference>
<dbReference type="SUPFAM" id="SSF81383">
    <property type="entry name" value="F-box domain"/>
    <property type="match status" value="1"/>
</dbReference>
<dbReference type="PROSITE" id="PS50188">
    <property type="entry name" value="B302_SPRY"/>
    <property type="match status" value="1"/>
</dbReference>
<dbReference type="PROSITE" id="PS50181">
    <property type="entry name" value="FBOX"/>
    <property type="match status" value="1"/>
</dbReference>
<comment type="pathway">
    <text>Protein modification; protein ubiquitination.</text>
</comment>
<comment type="subunit">
    <text evidence="1">Probable component of a E3 ubiquitin ligase complex.</text>
</comment>
<comment type="similarity">
    <text evidence="4">Belongs to the FBXO45/Fsn family.</text>
</comment>
<evidence type="ECO:0000250" key="1"/>
<evidence type="ECO:0000255" key="2">
    <source>
        <dbReference type="PROSITE-ProRule" id="PRU00080"/>
    </source>
</evidence>
<evidence type="ECO:0000255" key="3">
    <source>
        <dbReference type="PROSITE-ProRule" id="PRU00548"/>
    </source>
</evidence>
<evidence type="ECO:0000305" key="4"/>
<sequence>MSGAVATGGAQSAGLGAAAAGCCSSASGAGSAALLSGGSGIAGRLPSRVLEHIFSYLELMDLLNCSLVCWHWNNCLSDENSEVWRSLCARSLSDEAMRSDILCNLASYKGKLKSFQHALSSHDCSRNVYIKKNGFTLHRNPIAQSTDGARGKIGFSEGRHAWEIWWEGPLGTVAVIGIATKRAPMQCQGYVALLGSDDQSWGWNLVDNNLLHNGEVNGNFPQCNNAPKYQIGERIRVILDMDDKTLAFERGFEFLGVAFRGLPKTCLFPAVSAVYGNTEVTMVYLGRPLDG</sequence>
<name>FBSP1_DANRE</name>
<gene>
    <name type="primary">fbxo45</name>
    <name type="ORF">zgc:65875</name>
</gene>
<accession>Q6NZ03</accession>
<accession>Q6PH10</accession>
<proteinExistence type="evidence at transcript level"/>
<organism>
    <name type="scientific">Danio rerio</name>
    <name type="common">Zebrafish</name>
    <name type="synonym">Brachydanio rerio</name>
    <dbReference type="NCBI Taxonomy" id="7955"/>
    <lineage>
        <taxon>Eukaryota</taxon>
        <taxon>Metazoa</taxon>
        <taxon>Chordata</taxon>
        <taxon>Craniata</taxon>
        <taxon>Vertebrata</taxon>
        <taxon>Euteleostomi</taxon>
        <taxon>Actinopterygii</taxon>
        <taxon>Neopterygii</taxon>
        <taxon>Teleostei</taxon>
        <taxon>Ostariophysi</taxon>
        <taxon>Cypriniformes</taxon>
        <taxon>Danionidae</taxon>
        <taxon>Danioninae</taxon>
        <taxon>Danio</taxon>
    </lineage>
</organism>
<protein>
    <recommendedName>
        <fullName>F-box/SPRY domain-containing protein 1</fullName>
    </recommendedName>
    <alternativeName>
        <fullName>F-box only protein 45</fullName>
    </alternativeName>
</protein>
<keyword id="KW-1185">Reference proteome</keyword>
<keyword id="KW-0833">Ubl conjugation pathway</keyword>